<organism>
    <name type="scientific">Dickeya chrysanthemi</name>
    <name type="common">Pectobacterium chrysanthemi</name>
    <name type="synonym">Erwinia chrysanthemi</name>
    <dbReference type="NCBI Taxonomy" id="556"/>
    <lineage>
        <taxon>Bacteria</taxon>
        <taxon>Pseudomonadati</taxon>
        <taxon>Pseudomonadota</taxon>
        <taxon>Gammaproteobacteria</taxon>
        <taxon>Enterobacterales</taxon>
        <taxon>Pectobacteriaceae</taxon>
        <taxon>Dickeya</taxon>
    </lineage>
</organism>
<dbReference type="EMBL" id="M37886">
    <property type="protein sequence ID" value="AAA24827.1"/>
    <property type="molecule type" value="Genomic_DNA"/>
</dbReference>
<dbReference type="EMBL" id="L02214">
    <property type="protein sequence ID" value="AAA24836.1"/>
    <property type="molecule type" value="Genomic_DNA"/>
</dbReference>
<dbReference type="PIR" id="G47021">
    <property type="entry name" value="G47021"/>
</dbReference>
<dbReference type="SMR" id="P24688"/>
<dbReference type="OMA" id="RTWYWQQ"/>
<dbReference type="GO" id="GO:0005886">
    <property type="term" value="C:plasma membrane"/>
    <property type="evidence" value="ECO:0007669"/>
    <property type="project" value="UniProtKB-SubCell"/>
</dbReference>
<dbReference type="GO" id="GO:0015627">
    <property type="term" value="C:type II protein secretion system complex"/>
    <property type="evidence" value="ECO:0007669"/>
    <property type="project" value="InterPro"/>
</dbReference>
<dbReference type="GO" id="GO:0015628">
    <property type="term" value="P:protein secretion by the type II secretion system"/>
    <property type="evidence" value="ECO:0007669"/>
    <property type="project" value="InterPro"/>
</dbReference>
<dbReference type="Gene3D" id="3.30.1300.30">
    <property type="entry name" value="GSPII I/J protein-like"/>
    <property type="match status" value="1"/>
</dbReference>
<dbReference type="InterPro" id="IPR012902">
    <property type="entry name" value="N_methyl_site"/>
</dbReference>
<dbReference type="InterPro" id="IPR045584">
    <property type="entry name" value="Pilin-like"/>
</dbReference>
<dbReference type="InterPro" id="IPR003413">
    <property type="entry name" value="T2SS_GspI_C"/>
</dbReference>
<dbReference type="InterPro" id="IPR010052">
    <property type="entry name" value="T2SS_protein-GspI"/>
</dbReference>
<dbReference type="NCBIfam" id="TIGR01707">
    <property type="entry name" value="gspI"/>
    <property type="match status" value="1"/>
</dbReference>
<dbReference type="NCBIfam" id="TIGR02532">
    <property type="entry name" value="IV_pilin_GFxxxE"/>
    <property type="match status" value="1"/>
</dbReference>
<dbReference type="PANTHER" id="PTHR38779">
    <property type="entry name" value="TYPE II SECRETION SYSTEM PROTEIN I-RELATED"/>
    <property type="match status" value="1"/>
</dbReference>
<dbReference type="PANTHER" id="PTHR38779:SF2">
    <property type="entry name" value="TYPE II SECRETION SYSTEM PROTEIN I-RELATED"/>
    <property type="match status" value="1"/>
</dbReference>
<dbReference type="Pfam" id="PF07963">
    <property type="entry name" value="N_methyl"/>
    <property type="match status" value="1"/>
</dbReference>
<dbReference type="Pfam" id="PF02501">
    <property type="entry name" value="T2SSI"/>
    <property type="match status" value="1"/>
</dbReference>
<dbReference type="SUPFAM" id="SSF54523">
    <property type="entry name" value="Pili subunits"/>
    <property type="match status" value="1"/>
</dbReference>
<dbReference type="PROSITE" id="PS00409">
    <property type="entry name" value="PROKAR_NTER_METHYL"/>
    <property type="match status" value="1"/>
</dbReference>
<name>GSPI_DICCH</name>
<keyword id="KW-0997">Cell inner membrane</keyword>
<keyword id="KW-1003">Cell membrane</keyword>
<keyword id="KW-0472">Membrane</keyword>
<keyword id="KW-0488">Methylation</keyword>
<keyword id="KW-0653">Protein transport</keyword>
<keyword id="KW-0812">Transmembrane</keyword>
<keyword id="KW-1133">Transmembrane helix</keyword>
<keyword id="KW-0813">Transport</keyword>
<accession>P24688</accession>
<evidence type="ECO:0000250" key="1">
    <source>
        <dbReference type="UniProtKB" id="Q00516"/>
    </source>
</evidence>
<evidence type="ECO:0000255" key="2"/>
<evidence type="ECO:0000255" key="3">
    <source>
        <dbReference type="PROSITE-ProRule" id="PRU01070"/>
    </source>
</evidence>
<evidence type="ECO:0000305" key="4"/>
<gene>
    <name type="primary">outI</name>
</gene>
<comment type="function">
    <text evidence="1">Component of the type II secretion system required for the energy-dependent secretion of extracellular factors such as proteases and toxins from the periplasm. Part of the pseudopilus tip complex that is critical for the recognition and binding of secretion substrates.</text>
</comment>
<comment type="subunit">
    <text evidence="1">Type II secretion is composed of four main components: the outer membrane complex, the inner membrane complex, the cytoplasmic secretion ATPase and the periplasm-spanning pseudopilus. Interacts with core component OutG.</text>
</comment>
<comment type="subcellular location">
    <subcellularLocation>
        <location evidence="1">Cell inner membrane</location>
        <topology evidence="2">Single-pass membrane protein</topology>
    </subcellularLocation>
</comment>
<comment type="PTM">
    <text evidence="1">Cleaved by prepilin peptidase.</text>
</comment>
<comment type="PTM">
    <text evidence="1">Methylated by prepilin peptidase at the amino group of the N-terminal methionine once the leader sequence is cleaved by prepilin peptidase.</text>
</comment>
<comment type="similarity">
    <text evidence="4">Belongs to the GSP I family.</text>
</comment>
<protein>
    <recommendedName>
        <fullName>Type II secretion system protein I</fullName>
        <shortName>T2SS minor pseudopilin I</shortName>
    </recommendedName>
    <alternativeName>
        <fullName>General secretion pathway protein I</fullName>
    </alternativeName>
    <alternativeName>
        <fullName>Pectic enzymes secretion protein OutI</fullName>
    </alternativeName>
</protein>
<feature type="propeptide" id="PRO_0000024236" description="Leader sequence" evidence="3">
    <location>
        <begin position="1"/>
        <end position="5"/>
    </location>
</feature>
<feature type="chain" id="PRO_0000024237" description="Type II secretion system protein I">
    <location>
        <begin position="6"/>
        <end position="125"/>
    </location>
</feature>
<feature type="transmembrane region" description="Helical" evidence="2">
    <location>
        <begin position="6"/>
        <end position="26"/>
    </location>
</feature>
<feature type="modified residue" description="N-methylmethionine" evidence="3">
    <location>
        <position position="6"/>
    </location>
</feature>
<reference key="1">
    <citation type="journal article" date="1991" name="Proc. Natl. Acad. Sci. U.S.A.">
        <title>Cloned Erwinia chrysanthemi out genes enable Escherichia coli to selectively secrete a diverse family of heterologous proteins to its milieu.</title>
        <authorList>
            <person name="He S.Y."/>
            <person name="Lindeberg M."/>
            <person name="Chatterjee A.K."/>
            <person name="Collmer A."/>
        </authorList>
    </citation>
    <scope>NUCLEOTIDE SEQUENCE [GENOMIC DNA]</scope>
    <source>
        <strain>EC16</strain>
    </source>
</reference>
<reference key="2">
    <citation type="journal article" date="1992" name="J. Bacteriol.">
        <title>Analysis of eight out genes in a cluster required for pectic enzyme secretion by Erwinia chrysanthemi: sequence comparison with secretion genes from other Gram-negative bacteria.</title>
        <authorList>
            <person name="Lindeberg M."/>
            <person name="Collmer A."/>
        </authorList>
    </citation>
    <scope>NUCLEOTIDE SEQUENCE [GENOMIC DNA]</scope>
</reference>
<sequence>MKQQGMTLLEVMVALVIFALAGLTVLKTTAQQANGLGRLEEKTFALWIAENQQAAMRLEKQWPQSQWVDGEVNFAGSLWFWRIQGIATADTRVRAIDVEVRHDRDSRAADAVLRSYLVQPGEPAQ</sequence>
<proteinExistence type="inferred from homology"/>